<accession>A3DDM2</accession>
<proteinExistence type="inferred from homology"/>
<dbReference type="EC" id="2.7.1.23" evidence="1"/>
<dbReference type="EMBL" id="CP000568">
    <property type="protein sequence ID" value="ABN52051.1"/>
    <property type="molecule type" value="Genomic_DNA"/>
</dbReference>
<dbReference type="RefSeq" id="WP_003518725.1">
    <property type="nucleotide sequence ID" value="NC_009012.1"/>
</dbReference>
<dbReference type="SMR" id="A3DDM2"/>
<dbReference type="STRING" id="203119.Cthe_0816"/>
<dbReference type="GeneID" id="35803656"/>
<dbReference type="KEGG" id="cth:Cthe_0816"/>
<dbReference type="eggNOG" id="COG0061">
    <property type="taxonomic scope" value="Bacteria"/>
</dbReference>
<dbReference type="HOGENOM" id="CLU_008831_0_0_9"/>
<dbReference type="OrthoDB" id="9774737at2"/>
<dbReference type="Proteomes" id="UP000002145">
    <property type="component" value="Chromosome"/>
</dbReference>
<dbReference type="GO" id="GO:0005737">
    <property type="term" value="C:cytoplasm"/>
    <property type="evidence" value="ECO:0007669"/>
    <property type="project" value="UniProtKB-SubCell"/>
</dbReference>
<dbReference type="GO" id="GO:0005524">
    <property type="term" value="F:ATP binding"/>
    <property type="evidence" value="ECO:0007669"/>
    <property type="project" value="UniProtKB-KW"/>
</dbReference>
<dbReference type="GO" id="GO:0046872">
    <property type="term" value="F:metal ion binding"/>
    <property type="evidence" value="ECO:0007669"/>
    <property type="project" value="UniProtKB-UniRule"/>
</dbReference>
<dbReference type="GO" id="GO:0051287">
    <property type="term" value="F:NAD binding"/>
    <property type="evidence" value="ECO:0007669"/>
    <property type="project" value="UniProtKB-ARBA"/>
</dbReference>
<dbReference type="GO" id="GO:0003951">
    <property type="term" value="F:NAD+ kinase activity"/>
    <property type="evidence" value="ECO:0007669"/>
    <property type="project" value="UniProtKB-UniRule"/>
</dbReference>
<dbReference type="GO" id="GO:0019674">
    <property type="term" value="P:NAD metabolic process"/>
    <property type="evidence" value="ECO:0007669"/>
    <property type="project" value="InterPro"/>
</dbReference>
<dbReference type="GO" id="GO:0006741">
    <property type="term" value="P:NADP biosynthetic process"/>
    <property type="evidence" value="ECO:0007669"/>
    <property type="project" value="UniProtKB-UniRule"/>
</dbReference>
<dbReference type="Gene3D" id="3.40.50.10330">
    <property type="entry name" value="Probable inorganic polyphosphate/atp-NAD kinase, domain 1"/>
    <property type="match status" value="1"/>
</dbReference>
<dbReference type="Gene3D" id="2.60.200.30">
    <property type="entry name" value="Probable inorganic polyphosphate/atp-NAD kinase, domain 2"/>
    <property type="match status" value="1"/>
</dbReference>
<dbReference type="HAMAP" id="MF_00361">
    <property type="entry name" value="NAD_kinase"/>
    <property type="match status" value="1"/>
</dbReference>
<dbReference type="InterPro" id="IPR017438">
    <property type="entry name" value="ATP-NAD_kinase_N"/>
</dbReference>
<dbReference type="InterPro" id="IPR017437">
    <property type="entry name" value="ATP-NAD_kinase_PpnK-typ_C"/>
</dbReference>
<dbReference type="InterPro" id="IPR016064">
    <property type="entry name" value="NAD/diacylglycerol_kinase_sf"/>
</dbReference>
<dbReference type="InterPro" id="IPR002504">
    <property type="entry name" value="NADK"/>
</dbReference>
<dbReference type="PANTHER" id="PTHR20275">
    <property type="entry name" value="NAD KINASE"/>
    <property type="match status" value="1"/>
</dbReference>
<dbReference type="PANTHER" id="PTHR20275:SF0">
    <property type="entry name" value="NAD KINASE"/>
    <property type="match status" value="1"/>
</dbReference>
<dbReference type="Pfam" id="PF01513">
    <property type="entry name" value="NAD_kinase"/>
    <property type="match status" value="1"/>
</dbReference>
<dbReference type="Pfam" id="PF20143">
    <property type="entry name" value="NAD_kinase_C"/>
    <property type="match status" value="1"/>
</dbReference>
<dbReference type="SUPFAM" id="SSF111331">
    <property type="entry name" value="NAD kinase/diacylglycerol kinase-like"/>
    <property type="match status" value="1"/>
</dbReference>
<gene>
    <name evidence="1" type="primary">nadK</name>
    <name type="ordered locus">Cthe_0816</name>
</gene>
<organism>
    <name type="scientific">Acetivibrio thermocellus (strain ATCC 27405 / DSM 1237 / JCM 9322 / NBRC 103400 / NCIMB 10682 / NRRL B-4536 / VPI 7372)</name>
    <name type="common">Clostridium thermocellum</name>
    <dbReference type="NCBI Taxonomy" id="203119"/>
    <lineage>
        <taxon>Bacteria</taxon>
        <taxon>Bacillati</taxon>
        <taxon>Bacillota</taxon>
        <taxon>Clostridia</taxon>
        <taxon>Eubacteriales</taxon>
        <taxon>Oscillospiraceae</taxon>
        <taxon>Acetivibrio</taxon>
    </lineage>
</organism>
<keyword id="KW-0067">ATP-binding</keyword>
<keyword id="KW-0963">Cytoplasm</keyword>
<keyword id="KW-0418">Kinase</keyword>
<keyword id="KW-0520">NAD</keyword>
<keyword id="KW-0521">NADP</keyword>
<keyword id="KW-0547">Nucleotide-binding</keyword>
<keyword id="KW-1185">Reference proteome</keyword>
<keyword id="KW-0808">Transferase</keyword>
<protein>
    <recommendedName>
        <fullName evidence="1">NAD kinase</fullName>
        <ecNumber evidence="1">2.7.1.23</ecNumber>
    </recommendedName>
    <alternativeName>
        <fullName evidence="1">ATP-dependent NAD kinase</fullName>
    </alternativeName>
</protein>
<reference key="1">
    <citation type="submission" date="2007-02" db="EMBL/GenBank/DDBJ databases">
        <title>Complete sequence of Clostridium thermocellum ATCC 27405.</title>
        <authorList>
            <consortium name="US DOE Joint Genome Institute"/>
            <person name="Copeland A."/>
            <person name="Lucas S."/>
            <person name="Lapidus A."/>
            <person name="Barry K."/>
            <person name="Detter J.C."/>
            <person name="Glavina del Rio T."/>
            <person name="Hammon N."/>
            <person name="Israni S."/>
            <person name="Dalin E."/>
            <person name="Tice H."/>
            <person name="Pitluck S."/>
            <person name="Chertkov O."/>
            <person name="Brettin T."/>
            <person name="Bruce D."/>
            <person name="Han C."/>
            <person name="Tapia R."/>
            <person name="Gilna P."/>
            <person name="Schmutz J."/>
            <person name="Larimer F."/>
            <person name="Land M."/>
            <person name="Hauser L."/>
            <person name="Kyrpides N."/>
            <person name="Mikhailova N."/>
            <person name="Wu J.H.D."/>
            <person name="Newcomb M."/>
            <person name="Richardson P."/>
        </authorList>
    </citation>
    <scope>NUCLEOTIDE SEQUENCE [LARGE SCALE GENOMIC DNA]</scope>
    <source>
        <strain>ATCC 27405 / DSM 1237 / JCM 9322 / NBRC 103400 / NCIMB 10682 / NRRL B-4536 / VPI 7372</strain>
    </source>
</reference>
<sequence length="289" mass="31670">MLKIGIIPNEDKDEELKYTRILVDSIKKCGGTAIVCDDIALKLGDKESNINEDNIVDMSDVMVCLGGDGTFLKAARMTVVKGKPLLGVNLGKLGFLADVDKNDIENAVKRLVEDKFTVDERMMLDTVIVRDGKIIAEDIVLNDVVISRGAISRILHLKTYINDAFMDLYPGDGLIISTPTGSTAYSLSAGGPLVEPDVDLIICTPICPHLLYSRSFITTADRVIKVVVAESSSHEAMVTVDGQNGYEVRGGDVIITKKSRIRMPMVRLNGKNFFDVLRGKIYDRGESMK</sequence>
<feature type="chain" id="PRO_1000079485" description="NAD kinase">
    <location>
        <begin position="1"/>
        <end position="289"/>
    </location>
</feature>
<feature type="active site" description="Proton acceptor" evidence="1">
    <location>
        <position position="68"/>
    </location>
</feature>
<feature type="binding site" evidence="1">
    <location>
        <begin position="68"/>
        <end position="69"/>
    </location>
    <ligand>
        <name>NAD(+)</name>
        <dbReference type="ChEBI" id="CHEBI:57540"/>
    </ligand>
</feature>
<feature type="binding site" evidence="1">
    <location>
        <position position="73"/>
    </location>
    <ligand>
        <name>NAD(+)</name>
        <dbReference type="ChEBI" id="CHEBI:57540"/>
    </ligand>
</feature>
<feature type="binding site" evidence="1">
    <location>
        <begin position="142"/>
        <end position="143"/>
    </location>
    <ligand>
        <name>NAD(+)</name>
        <dbReference type="ChEBI" id="CHEBI:57540"/>
    </ligand>
</feature>
<feature type="binding site" evidence="1">
    <location>
        <position position="153"/>
    </location>
    <ligand>
        <name>NAD(+)</name>
        <dbReference type="ChEBI" id="CHEBI:57540"/>
    </ligand>
</feature>
<feature type="binding site" evidence="1">
    <location>
        <position position="172"/>
    </location>
    <ligand>
        <name>NAD(+)</name>
        <dbReference type="ChEBI" id="CHEBI:57540"/>
    </ligand>
</feature>
<feature type="binding site" evidence="1">
    <location>
        <begin position="183"/>
        <end position="188"/>
    </location>
    <ligand>
        <name>NAD(+)</name>
        <dbReference type="ChEBI" id="CHEBI:57540"/>
    </ligand>
</feature>
<feature type="binding site" evidence="1">
    <location>
        <position position="243"/>
    </location>
    <ligand>
        <name>NAD(+)</name>
        <dbReference type="ChEBI" id="CHEBI:57540"/>
    </ligand>
</feature>
<evidence type="ECO:0000255" key="1">
    <source>
        <dbReference type="HAMAP-Rule" id="MF_00361"/>
    </source>
</evidence>
<name>NADK_ACET2</name>
<comment type="function">
    <text evidence="1">Involved in the regulation of the intracellular balance of NAD and NADP, and is a key enzyme in the biosynthesis of NADP. Catalyzes specifically the phosphorylation on 2'-hydroxyl of the adenosine moiety of NAD to yield NADP.</text>
</comment>
<comment type="catalytic activity">
    <reaction evidence="1">
        <text>NAD(+) + ATP = ADP + NADP(+) + H(+)</text>
        <dbReference type="Rhea" id="RHEA:18629"/>
        <dbReference type="ChEBI" id="CHEBI:15378"/>
        <dbReference type="ChEBI" id="CHEBI:30616"/>
        <dbReference type="ChEBI" id="CHEBI:57540"/>
        <dbReference type="ChEBI" id="CHEBI:58349"/>
        <dbReference type="ChEBI" id="CHEBI:456216"/>
        <dbReference type="EC" id="2.7.1.23"/>
    </reaction>
</comment>
<comment type="cofactor">
    <cofactor evidence="1">
        <name>a divalent metal cation</name>
        <dbReference type="ChEBI" id="CHEBI:60240"/>
    </cofactor>
</comment>
<comment type="subcellular location">
    <subcellularLocation>
        <location evidence="1">Cytoplasm</location>
    </subcellularLocation>
</comment>
<comment type="similarity">
    <text evidence="1">Belongs to the NAD kinase family.</text>
</comment>